<reference key="1">
    <citation type="journal article" date="2003" name="Nature">
        <title>The genome sequence of Bacillus anthracis Ames and comparison to closely related bacteria.</title>
        <authorList>
            <person name="Read T.D."/>
            <person name="Peterson S.N."/>
            <person name="Tourasse N.J."/>
            <person name="Baillie L.W."/>
            <person name="Paulsen I.T."/>
            <person name="Nelson K.E."/>
            <person name="Tettelin H."/>
            <person name="Fouts D.E."/>
            <person name="Eisen J.A."/>
            <person name="Gill S.R."/>
            <person name="Holtzapple E.K."/>
            <person name="Okstad O.A."/>
            <person name="Helgason E."/>
            <person name="Rilstone J."/>
            <person name="Wu M."/>
            <person name="Kolonay J.F."/>
            <person name="Beanan M.J."/>
            <person name="Dodson R.J."/>
            <person name="Brinkac L.M."/>
            <person name="Gwinn M.L."/>
            <person name="DeBoy R.T."/>
            <person name="Madpu R."/>
            <person name="Daugherty S.C."/>
            <person name="Durkin A.S."/>
            <person name="Haft D.H."/>
            <person name="Nelson W.C."/>
            <person name="Peterson J.D."/>
            <person name="Pop M."/>
            <person name="Khouri H.M."/>
            <person name="Radune D."/>
            <person name="Benton J.L."/>
            <person name="Mahamoud Y."/>
            <person name="Jiang L."/>
            <person name="Hance I.R."/>
            <person name="Weidman J.F."/>
            <person name="Berry K.J."/>
            <person name="Plaut R.D."/>
            <person name="Wolf A.M."/>
            <person name="Watkins K.L."/>
            <person name="Nierman W.C."/>
            <person name="Hazen A."/>
            <person name="Cline R.T."/>
            <person name="Redmond C."/>
            <person name="Thwaite J.E."/>
            <person name="White O."/>
            <person name="Salzberg S.L."/>
            <person name="Thomason B."/>
            <person name="Friedlander A.M."/>
            <person name="Koehler T.M."/>
            <person name="Hanna P.C."/>
            <person name="Kolstoe A.-B."/>
            <person name="Fraser C.M."/>
        </authorList>
    </citation>
    <scope>NUCLEOTIDE SEQUENCE [LARGE SCALE GENOMIC DNA]</scope>
    <source>
        <strain>Ames / isolate Porton</strain>
    </source>
</reference>
<reference key="2">
    <citation type="submission" date="2004-01" db="EMBL/GenBank/DDBJ databases">
        <title>Complete genome sequence of Bacillus anthracis Sterne.</title>
        <authorList>
            <person name="Brettin T.S."/>
            <person name="Bruce D."/>
            <person name="Challacombe J.F."/>
            <person name="Gilna P."/>
            <person name="Han C."/>
            <person name="Hill K."/>
            <person name="Hitchcock P."/>
            <person name="Jackson P."/>
            <person name="Keim P."/>
            <person name="Longmire J."/>
            <person name="Lucas S."/>
            <person name="Okinaka R."/>
            <person name="Richardson P."/>
            <person name="Rubin E."/>
            <person name="Tice H."/>
        </authorList>
    </citation>
    <scope>NUCLEOTIDE SEQUENCE [LARGE SCALE GENOMIC DNA]</scope>
    <source>
        <strain>Sterne</strain>
    </source>
</reference>
<reference key="3">
    <citation type="journal article" date="2009" name="J. Bacteriol.">
        <title>The complete genome sequence of Bacillus anthracis Ames 'Ancestor'.</title>
        <authorList>
            <person name="Ravel J."/>
            <person name="Jiang L."/>
            <person name="Stanley S.T."/>
            <person name="Wilson M.R."/>
            <person name="Decker R.S."/>
            <person name="Read T.D."/>
            <person name="Worsham P."/>
            <person name="Keim P.S."/>
            <person name="Salzberg S.L."/>
            <person name="Fraser-Liggett C.M."/>
            <person name="Rasko D.A."/>
        </authorList>
    </citation>
    <scope>NUCLEOTIDE SEQUENCE [LARGE SCALE GENOMIC DNA]</scope>
    <source>
        <strain>Ames ancestor</strain>
    </source>
</reference>
<dbReference type="EC" id="1.6.5.-" evidence="1"/>
<dbReference type="EC" id="1.7.1.17" evidence="1"/>
<dbReference type="EMBL" id="AE016879">
    <property type="protein sequence ID" value="AAP29294.1"/>
    <property type="molecule type" value="Genomic_DNA"/>
</dbReference>
<dbReference type="EMBL" id="AE017225">
    <property type="protein sequence ID" value="AAT57550.1"/>
    <property type="molecule type" value="Genomic_DNA"/>
</dbReference>
<dbReference type="EMBL" id="AE017334">
    <property type="protein sequence ID" value="AAT34812.1"/>
    <property type="molecule type" value="Genomic_DNA"/>
</dbReference>
<dbReference type="RefSeq" id="NP_847808.1">
    <property type="nucleotide sequence ID" value="NC_003997.3"/>
</dbReference>
<dbReference type="RefSeq" id="WP_000170049.1">
    <property type="nucleotide sequence ID" value="NZ_WXXJ01000017.1"/>
</dbReference>
<dbReference type="RefSeq" id="YP_031500.1">
    <property type="nucleotide sequence ID" value="NC_005945.1"/>
</dbReference>
<dbReference type="PDB" id="3P0R">
    <property type="method" value="X-ray"/>
    <property type="resolution" value="1.80 A"/>
    <property type="chains" value="A=1-208"/>
</dbReference>
<dbReference type="PDBsum" id="3P0R"/>
<dbReference type="SMR" id="Q81JP2"/>
<dbReference type="DNASU" id="1085393"/>
<dbReference type="GeneID" id="45025237"/>
<dbReference type="KEGG" id="ban:BA_5660"/>
<dbReference type="KEGG" id="bar:GBAA_5660"/>
<dbReference type="KEGG" id="bat:BAS5262"/>
<dbReference type="PATRIC" id="fig|198094.11.peg.5620"/>
<dbReference type="eggNOG" id="COG1182">
    <property type="taxonomic scope" value="Bacteria"/>
</dbReference>
<dbReference type="HOGENOM" id="CLU_088964_3_1_9"/>
<dbReference type="OMA" id="EMSLNYM"/>
<dbReference type="OrthoDB" id="9805013at2"/>
<dbReference type="EvolutionaryTrace" id="Q81JP2"/>
<dbReference type="Proteomes" id="UP000000427">
    <property type="component" value="Chromosome"/>
</dbReference>
<dbReference type="Proteomes" id="UP000000594">
    <property type="component" value="Chromosome"/>
</dbReference>
<dbReference type="GO" id="GO:0009055">
    <property type="term" value="F:electron transfer activity"/>
    <property type="evidence" value="ECO:0007669"/>
    <property type="project" value="UniProtKB-UniRule"/>
</dbReference>
<dbReference type="GO" id="GO:0010181">
    <property type="term" value="F:FMN binding"/>
    <property type="evidence" value="ECO:0007669"/>
    <property type="project" value="UniProtKB-UniRule"/>
</dbReference>
<dbReference type="GO" id="GO:0016652">
    <property type="term" value="F:oxidoreductase activity, acting on NAD(P)H as acceptor"/>
    <property type="evidence" value="ECO:0007669"/>
    <property type="project" value="UniProtKB-UniRule"/>
</dbReference>
<dbReference type="GO" id="GO:0016655">
    <property type="term" value="F:oxidoreductase activity, acting on NAD(P)H, quinone or similar compound as acceptor"/>
    <property type="evidence" value="ECO:0007669"/>
    <property type="project" value="InterPro"/>
</dbReference>
<dbReference type="Gene3D" id="3.40.50.360">
    <property type="match status" value="1"/>
</dbReference>
<dbReference type="HAMAP" id="MF_01216">
    <property type="entry name" value="Azoreductase_type1"/>
    <property type="match status" value="1"/>
</dbReference>
<dbReference type="InterPro" id="IPR003680">
    <property type="entry name" value="Flavodoxin_fold"/>
</dbReference>
<dbReference type="InterPro" id="IPR029039">
    <property type="entry name" value="Flavoprotein-like_sf"/>
</dbReference>
<dbReference type="InterPro" id="IPR050104">
    <property type="entry name" value="FMN-dep_NADH:Q_OxRdtase_AzoR1"/>
</dbReference>
<dbReference type="InterPro" id="IPR023048">
    <property type="entry name" value="NADH:quinone_OxRdtase_FMN_depd"/>
</dbReference>
<dbReference type="NCBIfam" id="NF010075">
    <property type="entry name" value="PRK13556.1"/>
    <property type="match status" value="1"/>
</dbReference>
<dbReference type="PANTHER" id="PTHR43741">
    <property type="entry name" value="FMN-DEPENDENT NADH-AZOREDUCTASE 1"/>
    <property type="match status" value="1"/>
</dbReference>
<dbReference type="PANTHER" id="PTHR43741:SF4">
    <property type="entry name" value="FMN-DEPENDENT NADH:QUINONE OXIDOREDUCTASE"/>
    <property type="match status" value="1"/>
</dbReference>
<dbReference type="Pfam" id="PF02525">
    <property type="entry name" value="Flavodoxin_2"/>
    <property type="match status" value="1"/>
</dbReference>
<dbReference type="SUPFAM" id="SSF52218">
    <property type="entry name" value="Flavoproteins"/>
    <property type="match status" value="1"/>
</dbReference>
<gene>
    <name evidence="1" type="primary">azoR4</name>
    <name type="ordered locus">BA_5660</name>
    <name type="ordered locus">GBAA_5660</name>
    <name type="ordered locus">BAS5262</name>
</gene>
<accession>Q81JP2</accession>
<accession>Q6HQ88</accession>
<accession>Q6KJM2</accession>
<feature type="chain" id="PRO_0000245876" description="FMN-dependent NADH:quinone oxidoreductase 4">
    <location>
        <begin position="1"/>
        <end position="208"/>
    </location>
</feature>
<feature type="strand" evidence="2">
    <location>
        <begin position="3"/>
        <end position="8"/>
    </location>
</feature>
<feature type="turn" evidence="2">
    <location>
        <begin position="14"/>
        <end position="16"/>
    </location>
</feature>
<feature type="helix" evidence="2">
    <location>
        <begin position="18"/>
        <end position="33"/>
    </location>
</feature>
<feature type="strand" evidence="2">
    <location>
        <begin position="37"/>
        <end position="43"/>
    </location>
</feature>
<feature type="helix" evidence="2">
    <location>
        <begin position="44"/>
        <end position="46"/>
    </location>
</feature>
<feature type="helix" evidence="2">
    <location>
        <begin position="54"/>
        <end position="65"/>
    </location>
</feature>
<feature type="helix" evidence="2">
    <location>
        <begin position="71"/>
        <end position="89"/>
    </location>
</feature>
<feature type="strand" evidence="2">
    <location>
        <begin position="91"/>
        <end position="98"/>
    </location>
</feature>
<feature type="helix" evidence="2">
    <location>
        <begin position="106"/>
        <end position="115"/>
    </location>
</feature>
<feature type="turn" evidence="2">
    <location>
        <begin position="118"/>
        <end position="120"/>
    </location>
</feature>
<feature type="strand" evidence="2">
    <location>
        <begin position="121"/>
        <end position="123"/>
    </location>
</feature>
<feature type="strand" evidence="2">
    <location>
        <begin position="130"/>
        <end position="132"/>
    </location>
</feature>
<feature type="strand" evidence="2">
    <location>
        <begin position="137"/>
        <end position="146"/>
    </location>
</feature>
<feature type="strand" evidence="2">
    <location>
        <begin position="149"/>
        <end position="151"/>
    </location>
</feature>
<feature type="helix" evidence="2">
    <location>
        <begin position="154"/>
        <end position="156"/>
    </location>
</feature>
<feature type="helix" evidence="2">
    <location>
        <begin position="160"/>
        <end position="169"/>
    </location>
</feature>
<feature type="strand" evidence="2">
    <location>
        <begin position="176"/>
        <end position="181"/>
    </location>
</feature>
<feature type="turn" evidence="2">
    <location>
        <begin position="183"/>
        <end position="185"/>
    </location>
</feature>
<feature type="helix" evidence="2">
    <location>
        <begin position="187"/>
        <end position="189"/>
    </location>
</feature>
<feature type="helix" evidence="2">
    <location>
        <begin position="190"/>
        <end position="207"/>
    </location>
</feature>
<organism>
    <name type="scientific">Bacillus anthracis</name>
    <dbReference type="NCBI Taxonomy" id="1392"/>
    <lineage>
        <taxon>Bacteria</taxon>
        <taxon>Bacillati</taxon>
        <taxon>Bacillota</taxon>
        <taxon>Bacilli</taxon>
        <taxon>Bacillales</taxon>
        <taxon>Bacillaceae</taxon>
        <taxon>Bacillus</taxon>
        <taxon>Bacillus cereus group</taxon>
    </lineage>
</organism>
<sequence length="208" mass="22840">MTKVLFVKANNRPAEQAVSVKLYEAFLASYKEAHPNDTVVELDLYKEELPYVGVDMINGTFKAGKGFDLTEEEAKAVAVADKYLNQFLEADKVVFGFPLWNLTIPAVLHTYIDYLNRAGKTFKYTPEGPVGLIGDKKIALLNARGGVYSEGPAAEVEMAVKYVASMMGFFGATNMETVVIEGHNQFPDKAEEIITAGLEEAAKVANKF</sequence>
<proteinExistence type="evidence at protein level"/>
<evidence type="ECO:0000255" key="1">
    <source>
        <dbReference type="HAMAP-Rule" id="MF_01216"/>
    </source>
</evidence>
<evidence type="ECO:0007829" key="2">
    <source>
        <dbReference type="PDB" id="3P0R"/>
    </source>
</evidence>
<comment type="function">
    <text evidence="1">Quinone reductase that provides resistance to thiol-specific stress caused by electrophilic quinones.</text>
</comment>
<comment type="function">
    <text evidence="1">Also exhibits azoreductase activity. Catalyzes the reductive cleavage of the azo bond in aromatic azo compounds to the corresponding amines.</text>
</comment>
<comment type="catalytic activity">
    <reaction evidence="1">
        <text>2 a quinone + NADH + H(+) = 2 a 1,4-benzosemiquinone + NAD(+)</text>
        <dbReference type="Rhea" id="RHEA:65952"/>
        <dbReference type="ChEBI" id="CHEBI:15378"/>
        <dbReference type="ChEBI" id="CHEBI:57540"/>
        <dbReference type="ChEBI" id="CHEBI:57945"/>
        <dbReference type="ChEBI" id="CHEBI:132124"/>
        <dbReference type="ChEBI" id="CHEBI:134225"/>
    </reaction>
</comment>
<comment type="catalytic activity">
    <reaction evidence="1">
        <text>N,N-dimethyl-1,4-phenylenediamine + anthranilate + 2 NAD(+) = 2-(4-dimethylaminophenyl)diazenylbenzoate + 2 NADH + 2 H(+)</text>
        <dbReference type="Rhea" id="RHEA:55872"/>
        <dbReference type="ChEBI" id="CHEBI:15378"/>
        <dbReference type="ChEBI" id="CHEBI:15783"/>
        <dbReference type="ChEBI" id="CHEBI:16567"/>
        <dbReference type="ChEBI" id="CHEBI:57540"/>
        <dbReference type="ChEBI" id="CHEBI:57945"/>
        <dbReference type="ChEBI" id="CHEBI:71579"/>
        <dbReference type="EC" id="1.7.1.17"/>
    </reaction>
</comment>
<comment type="cofactor">
    <cofactor evidence="1">
        <name>FMN</name>
        <dbReference type="ChEBI" id="CHEBI:58210"/>
    </cofactor>
    <text evidence="1">Binds 1 FMN per subunit.</text>
</comment>
<comment type="subunit">
    <text evidence="1">Homodimer.</text>
</comment>
<comment type="similarity">
    <text evidence="1">Belongs to the azoreductase type 1 family.</text>
</comment>
<keyword id="KW-0002">3D-structure</keyword>
<keyword id="KW-0285">Flavoprotein</keyword>
<keyword id="KW-0288">FMN</keyword>
<keyword id="KW-0520">NAD</keyword>
<keyword id="KW-0560">Oxidoreductase</keyword>
<keyword id="KW-1185">Reference proteome</keyword>
<protein>
    <recommendedName>
        <fullName evidence="1">FMN-dependent NADH:quinone oxidoreductase 4</fullName>
        <ecNumber evidence="1">1.6.5.-</ecNumber>
    </recommendedName>
    <alternativeName>
        <fullName evidence="1">Azo-dye reductase 4</fullName>
    </alternativeName>
    <alternativeName>
        <fullName evidence="1">FMN-dependent NADH-azo compound oxidoreductase 4</fullName>
    </alternativeName>
    <alternativeName>
        <fullName evidence="1">FMN-dependent NADH-azoreductase 4</fullName>
        <ecNumber evidence="1">1.7.1.17</ecNumber>
    </alternativeName>
</protein>
<name>AZOR4_BACAN</name>